<organism>
    <name type="scientific">Calliphora vicina</name>
    <name type="common">Blue blowfly</name>
    <name type="synonym">Calliphora erythrocephala</name>
    <dbReference type="NCBI Taxonomy" id="7373"/>
    <lineage>
        <taxon>Eukaryota</taxon>
        <taxon>Metazoa</taxon>
        <taxon>Ecdysozoa</taxon>
        <taxon>Arthropoda</taxon>
        <taxon>Hexapoda</taxon>
        <taxon>Insecta</taxon>
        <taxon>Pterygota</taxon>
        <taxon>Neoptera</taxon>
        <taxon>Endopterygota</taxon>
        <taxon>Diptera</taxon>
        <taxon>Brachycera</taxon>
        <taxon>Muscomorpha</taxon>
        <taxon>Oestroidea</taxon>
        <taxon>Calliphoridae</taxon>
        <taxon>Calliphorinae</taxon>
        <taxon>Calliphora</taxon>
    </lineage>
</organism>
<proteinExistence type="evidence at transcript level"/>
<evidence type="ECO:0000255" key="1"/>
<evidence type="ECO:0000305" key="2"/>
<dbReference type="EMBL" id="M76479">
    <property type="status" value="NOT_ANNOTATED_CDS"/>
    <property type="molecule type" value="Genomic_DNA"/>
</dbReference>
<dbReference type="EMBL" id="X59390">
    <property type="protein sequence ID" value="CAA42033.1"/>
    <property type="molecule type" value="Genomic_DNA"/>
</dbReference>
<dbReference type="PIR" id="JQ1044">
    <property type="entry name" value="JQ1044"/>
</dbReference>
<dbReference type="SMR" id="P28514"/>
<dbReference type="GO" id="GO:0005576">
    <property type="term" value="C:extracellular region"/>
    <property type="evidence" value="ECO:0007669"/>
    <property type="project" value="UniProtKB-SubCell"/>
</dbReference>
<dbReference type="GO" id="GO:0045735">
    <property type="term" value="F:nutrient reservoir activity"/>
    <property type="evidence" value="ECO:0007669"/>
    <property type="project" value="UniProtKB-KW"/>
</dbReference>
<dbReference type="FunFam" id="2.60.40.1520:FF:000002">
    <property type="entry name" value="Larval serum protein 2"/>
    <property type="match status" value="1"/>
</dbReference>
<dbReference type="Gene3D" id="1.10.1280.10">
    <property type="entry name" value="Di-copper center containing domain from catechol oxidase"/>
    <property type="match status" value="1"/>
</dbReference>
<dbReference type="Gene3D" id="2.60.40.1520">
    <property type="entry name" value="Hemocyanin, C-terminal domain"/>
    <property type="match status" value="1"/>
</dbReference>
<dbReference type="Gene3D" id="1.20.1370.10">
    <property type="entry name" value="Hemocyanin, N-terminal domain"/>
    <property type="match status" value="1"/>
</dbReference>
<dbReference type="InterPro" id="IPR008922">
    <property type="entry name" value="Di-copper_centre_dom_sf"/>
</dbReference>
<dbReference type="InterPro" id="IPR013788">
    <property type="entry name" value="Hemocyanin/hexamerin"/>
</dbReference>
<dbReference type="InterPro" id="IPR000896">
    <property type="entry name" value="Hemocyanin/hexamerin_mid_dom"/>
</dbReference>
<dbReference type="InterPro" id="IPR005203">
    <property type="entry name" value="Hemocyanin_C"/>
</dbReference>
<dbReference type="InterPro" id="IPR037020">
    <property type="entry name" value="Hemocyanin_C_sf"/>
</dbReference>
<dbReference type="InterPro" id="IPR005204">
    <property type="entry name" value="Hemocyanin_N"/>
</dbReference>
<dbReference type="InterPro" id="IPR036697">
    <property type="entry name" value="Hemocyanin_N_sf"/>
</dbReference>
<dbReference type="InterPro" id="IPR014756">
    <property type="entry name" value="Ig_E-set"/>
</dbReference>
<dbReference type="PANTHER" id="PTHR11511:SF5">
    <property type="entry name" value="FAT-BODY PROTEIN 1-RELATED"/>
    <property type="match status" value="1"/>
</dbReference>
<dbReference type="PANTHER" id="PTHR11511">
    <property type="entry name" value="LARVAL STORAGE PROTEIN/PHENOLOXIDASE"/>
    <property type="match status" value="1"/>
</dbReference>
<dbReference type="Pfam" id="PF03723">
    <property type="entry name" value="Hemocyanin_C"/>
    <property type="match status" value="1"/>
</dbReference>
<dbReference type="Pfam" id="PF00372">
    <property type="entry name" value="Hemocyanin_M"/>
    <property type="match status" value="2"/>
</dbReference>
<dbReference type="Pfam" id="PF03722">
    <property type="entry name" value="Hemocyanin_N"/>
    <property type="match status" value="2"/>
</dbReference>
<dbReference type="PRINTS" id="PR00187">
    <property type="entry name" value="HAEMOCYANIN"/>
</dbReference>
<dbReference type="SUPFAM" id="SSF48056">
    <property type="entry name" value="Di-copper centre-containing domain"/>
    <property type="match status" value="1"/>
</dbReference>
<dbReference type="SUPFAM" id="SSF81296">
    <property type="entry name" value="E set domains"/>
    <property type="match status" value="1"/>
</dbReference>
<dbReference type="SUPFAM" id="SSF48050">
    <property type="entry name" value="Hemocyanin, N-terminal domain"/>
    <property type="match status" value="1"/>
</dbReference>
<dbReference type="PROSITE" id="PS00210">
    <property type="entry name" value="HEMOCYANIN_2"/>
    <property type="match status" value="1"/>
</dbReference>
<keyword id="KW-0964">Secreted</keyword>
<keyword id="KW-0732">Signal</keyword>
<keyword id="KW-0758">Storage protein</keyword>
<protein>
    <recommendedName>
        <fullName>Arylphorin subunit C223</fullName>
    </recommendedName>
</protein>
<name>ARY2_CALVI</name>
<feature type="signal peptide" evidence="1">
    <location>
        <begin position="1"/>
        <end position="15"/>
    </location>
</feature>
<feature type="chain" id="PRO_0000013332" description="Arylphorin subunit C223">
    <location>
        <begin position="16"/>
        <end position="759"/>
    </location>
</feature>
<comment type="function">
    <text>Arylphorin is a larval storage protein (LSP) which may serve as a storage protein used primarily as a source of aromatic amino acids for protein synthesis during metamorphosis. It is a constituent of the sclerotizing system of the cuticle, and serves as a carrier for ecdysteroid hormone.</text>
</comment>
<comment type="subunit">
    <text>Heterohexamer.</text>
</comment>
<comment type="subcellular location">
    <subcellularLocation>
        <location>Secreted</location>
        <location>Extracellular space</location>
    </subcellularLocation>
</comment>
<comment type="tissue specificity">
    <text>Fat body.</text>
</comment>
<comment type="similarity">
    <text evidence="2">Belongs to the hemocyanin family.</text>
</comment>
<accession>P28514</accession>
<sequence>MKIAIVLLAIVGLAASASITDKKVKIADKDFLAKQKFLFEIVYRVEDPLMFEEWIKMGKSFTFDKADYNHFDMYMDKFYEAYKYGAILPKGEFFYYAKNWEVFQRNVAFARMHCNEGMFVYALTLAVIHRDDFHGLILPSIYEIFPQYFFNSKFVYEAEKFDYDVWSKYIMYEKEYKDILYKDYATFYKNHDNHYYYFFTKDFKTYQWWKMMGLGEHWYSEDRFMLRDNMDKYNKDSKYLEIFEGTKMFFMPVDYTRDIEFFNKESALSYFTEDVGFNAYWYYLNMDYAFFLDGKTYGLNKDRRGEYWLYNVRQLLSRYYMERLSHGFGEIPAFSFIDSIEYGYNPQLVYHNGVGFSYRKNYYEVESFGKFDYFYKVLDFFNRMDEIITKGVYVTYDGKTIDLRKPESIEYIGSIMQGNVDTLHSYFFKYWYMFAHMYLAYDNTQTLQVFPHIFLNYETSMRDPMFYMFYKKIASVYFQFFNYVKPYTHEELLFPGVTIKDVKVSELVTYFDLVDFDVTNLMNDKMTFVDGQFVWDKTLLARQMRLNHKPFDFDFVIESDKAQKVVIRTYLGPKYDEFGRVISLTENRENFMELDSFLYTLKSGVNEFKRYSKDFYWTVEDRTTYTELYKYVMLALQGKYDFPLDISEPHCGFPDRLVLPHGWYKGMPMQFFFYVTPFTTEYEQFSTYDYSYSCGLGSGVRYIDETCFGYPFDREIDEYEFFVPNMYFKDVKIFHQDTFEKYFEHKYEKFGHFDYNYHH</sequence>
<reference key="1">
    <citation type="journal article" date="1991" name="Biochem. Biophys. Res. Commun.">
        <title>Complete cDNA and gene sequence of the developmentally regulated arylphorin of Calliphora vicina and its homology to insect hemolymph proteins and arthropod hemocyanins.</title>
        <authorList>
            <person name="Naumann U."/>
            <person name="Scheller K."/>
        </authorList>
    </citation>
    <scope>NUCLEOTIDE SEQUENCE [GENOMIC DNA]</scope>
    <source>
        <tissue>Fat body</tissue>
    </source>
</reference>